<keyword id="KW-0067">ATP-binding</keyword>
<keyword id="KW-0173">Coenzyme A biosynthesis</keyword>
<keyword id="KW-0963">Cytoplasm</keyword>
<keyword id="KW-0418">Kinase</keyword>
<keyword id="KW-0547">Nucleotide-binding</keyword>
<keyword id="KW-1185">Reference proteome</keyword>
<keyword id="KW-0808">Transferase</keyword>
<organism>
    <name type="scientific">Corynebacterium diphtheriae (strain ATCC 700971 / NCTC 13129 / Biotype gravis)</name>
    <dbReference type="NCBI Taxonomy" id="257309"/>
    <lineage>
        <taxon>Bacteria</taxon>
        <taxon>Bacillati</taxon>
        <taxon>Actinomycetota</taxon>
        <taxon>Actinomycetes</taxon>
        <taxon>Mycobacteriales</taxon>
        <taxon>Corynebacteriaceae</taxon>
        <taxon>Corynebacterium</taxon>
    </lineage>
</organism>
<gene>
    <name evidence="1" type="primary">coaA</name>
    <name type="ordered locus">DIP0931</name>
</gene>
<sequence length="308" mass="35233">MARDKDLSPYLDFDRETWRHLRMSMPQVLTEQEVVELRGIGENIDLDEVAEVYLPLSRLIHLQVHARQELTQATETFLGEKAPHIPFVIGVAGSVAVGKSTTARLLQVLLQRWDEHPRVDLVTTDGFLHPTEILKKRGILDRKGFPESYDQRALLRFVTDVKAGKAHVKAPVYSHTLYDRVENECVTVSRPDILIVEGLNVLQTGPTLSVSDLFDFSVYVDAALEDIERWYIDRFLKLRQLAFRAPNAHFSHYADMGDRAATDEARRIWQTINLPNLVEHILPTRVRASLVLCKGADHKVARVRMRKI</sequence>
<evidence type="ECO:0000255" key="1">
    <source>
        <dbReference type="HAMAP-Rule" id="MF_00215"/>
    </source>
</evidence>
<accession>Q6NI48</accession>
<protein>
    <recommendedName>
        <fullName evidence="1">Pantothenate kinase</fullName>
        <ecNumber evidence="1">2.7.1.33</ecNumber>
    </recommendedName>
    <alternativeName>
        <fullName evidence="1">Pantothenic acid kinase</fullName>
    </alternativeName>
</protein>
<comment type="catalytic activity">
    <reaction evidence="1">
        <text>(R)-pantothenate + ATP = (R)-4'-phosphopantothenate + ADP + H(+)</text>
        <dbReference type="Rhea" id="RHEA:16373"/>
        <dbReference type="ChEBI" id="CHEBI:10986"/>
        <dbReference type="ChEBI" id="CHEBI:15378"/>
        <dbReference type="ChEBI" id="CHEBI:29032"/>
        <dbReference type="ChEBI" id="CHEBI:30616"/>
        <dbReference type="ChEBI" id="CHEBI:456216"/>
        <dbReference type="EC" id="2.7.1.33"/>
    </reaction>
</comment>
<comment type="pathway">
    <text evidence="1">Cofactor biosynthesis; coenzyme A biosynthesis; CoA from (R)-pantothenate: step 1/5.</text>
</comment>
<comment type="subcellular location">
    <subcellularLocation>
        <location evidence="1">Cytoplasm</location>
    </subcellularLocation>
</comment>
<comment type="similarity">
    <text evidence="1">Belongs to the prokaryotic pantothenate kinase family.</text>
</comment>
<reference key="1">
    <citation type="journal article" date="2003" name="Nucleic Acids Res.">
        <title>The complete genome sequence and analysis of Corynebacterium diphtheriae NCTC13129.</title>
        <authorList>
            <person name="Cerdeno-Tarraga A.-M."/>
            <person name="Efstratiou A."/>
            <person name="Dover L.G."/>
            <person name="Holden M.T.G."/>
            <person name="Pallen M.J."/>
            <person name="Bentley S.D."/>
            <person name="Besra G.S."/>
            <person name="Churcher C.M."/>
            <person name="James K.D."/>
            <person name="De Zoysa A."/>
            <person name="Chillingworth T."/>
            <person name="Cronin A."/>
            <person name="Dowd L."/>
            <person name="Feltwell T."/>
            <person name="Hamlin N."/>
            <person name="Holroyd S."/>
            <person name="Jagels K."/>
            <person name="Moule S."/>
            <person name="Quail M.A."/>
            <person name="Rabbinowitsch E."/>
            <person name="Rutherford K.M."/>
            <person name="Thomson N.R."/>
            <person name="Unwin L."/>
            <person name="Whitehead S."/>
            <person name="Barrell B.G."/>
            <person name="Parkhill J."/>
        </authorList>
    </citation>
    <scope>NUCLEOTIDE SEQUENCE [LARGE SCALE GENOMIC DNA]</scope>
    <source>
        <strain>ATCC 700971 / NCTC 13129 / Biotype gravis</strain>
    </source>
</reference>
<name>COAA_CORDI</name>
<proteinExistence type="inferred from homology"/>
<feature type="chain" id="PRO_0000325548" description="Pantothenate kinase">
    <location>
        <begin position="1"/>
        <end position="308"/>
    </location>
</feature>
<feature type="binding site" evidence="1">
    <location>
        <begin position="93"/>
        <end position="100"/>
    </location>
    <ligand>
        <name>ATP</name>
        <dbReference type="ChEBI" id="CHEBI:30616"/>
    </ligand>
</feature>
<dbReference type="EC" id="2.7.1.33" evidence="1"/>
<dbReference type="EMBL" id="BX248356">
    <property type="protein sequence ID" value="CAE49450.1"/>
    <property type="molecule type" value="Genomic_DNA"/>
</dbReference>
<dbReference type="RefSeq" id="WP_003850853.1">
    <property type="nucleotide sequence ID" value="NC_002935.2"/>
</dbReference>
<dbReference type="SMR" id="Q6NI48"/>
<dbReference type="STRING" id="257309.DIP0931"/>
<dbReference type="GeneID" id="29423065"/>
<dbReference type="KEGG" id="cdi:DIP0931"/>
<dbReference type="HOGENOM" id="CLU_053818_1_1_11"/>
<dbReference type="UniPathway" id="UPA00241">
    <property type="reaction ID" value="UER00352"/>
</dbReference>
<dbReference type="Proteomes" id="UP000002198">
    <property type="component" value="Chromosome"/>
</dbReference>
<dbReference type="GO" id="GO:0005737">
    <property type="term" value="C:cytoplasm"/>
    <property type="evidence" value="ECO:0007669"/>
    <property type="project" value="UniProtKB-SubCell"/>
</dbReference>
<dbReference type="GO" id="GO:0005524">
    <property type="term" value="F:ATP binding"/>
    <property type="evidence" value="ECO:0007669"/>
    <property type="project" value="UniProtKB-UniRule"/>
</dbReference>
<dbReference type="GO" id="GO:0004594">
    <property type="term" value="F:pantothenate kinase activity"/>
    <property type="evidence" value="ECO:0007669"/>
    <property type="project" value="UniProtKB-UniRule"/>
</dbReference>
<dbReference type="GO" id="GO:0015937">
    <property type="term" value="P:coenzyme A biosynthetic process"/>
    <property type="evidence" value="ECO:0007669"/>
    <property type="project" value="UniProtKB-UniRule"/>
</dbReference>
<dbReference type="CDD" id="cd02025">
    <property type="entry name" value="PanK"/>
    <property type="match status" value="1"/>
</dbReference>
<dbReference type="Gene3D" id="3.40.50.300">
    <property type="entry name" value="P-loop containing nucleotide triphosphate hydrolases"/>
    <property type="match status" value="1"/>
</dbReference>
<dbReference type="HAMAP" id="MF_00215">
    <property type="entry name" value="Pantothen_kinase_1"/>
    <property type="match status" value="1"/>
</dbReference>
<dbReference type="InterPro" id="IPR027417">
    <property type="entry name" value="P-loop_NTPase"/>
</dbReference>
<dbReference type="InterPro" id="IPR004566">
    <property type="entry name" value="PanK"/>
</dbReference>
<dbReference type="InterPro" id="IPR006083">
    <property type="entry name" value="PRK/URK"/>
</dbReference>
<dbReference type="NCBIfam" id="TIGR00554">
    <property type="entry name" value="panK_bact"/>
    <property type="match status" value="1"/>
</dbReference>
<dbReference type="PANTHER" id="PTHR10285">
    <property type="entry name" value="URIDINE KINASE"/>
    <property type="match status" value="1"/>
</dbReference>
<dbReference type="Pfam" id="PF00485">
    <property type="entry name" value="PRK"/>
    <property type="match status" value="1"/>
</dbReference>
<dbReference type="PIRSF" id="PIRSF000545">
    <property type="entry name" value="Pantothenate_kin"/>
    <property type="match status" value="1"/>
</dbReference>
<dbReference type="SUPFAM" id="SSF52540">
    <property type="entry name" value="P-loop containing nucleoside triphosphate hydrolases"/>
    <property type="match status" value="1"/>
</dbReference>